<feature type="chain" id="PRO_0000088453" description="Putative zinc metalloprotease PA3649">
    <location>
        <begin position="1"/>
        <end position="450"/>
    </location>
</feature>
<feature type="transmembrane region" description="Helical" evidence="2">
    <location>
        <begin position="97"/>
        <end position="119"/>
    </location>
</feature>
<feature type="transmembrane region" description="Helical" evidence="2">
    <location>
        <begin position="425"/>
        <end position="444"/>
    </location>
</feature>
<feature type="domain" description="PDZ">
    <location>
        <begin position="199"/>
        <end position="291"/>
    </location>
</feature>
<feature type="active site" evidence="3">
    <location>
        <position position="22"/>
    </location>
</feature>
<feature type="binding site" evidence="3">
    <location>
        <position position="21"/>
    </location>
    <ligand>
        <name>Zn(2+)</name>
        <dbReference type="ChEBI" id="CHEBI:29105"/>
        <note>catalytic</note>
    </ligand>
</feature>
<feature type="binding site" evidence="3">
    <location>
        <position position="25"/>
    </location>
    <ligand>
        <name>Zn(2+)</name>
        <dbReference type="ChEBI" id="CHEBI:29105"/>
        <note>catalytic</note>
    </ligand>
</feature>
<feature type="strand" evidence="5">
    <location>
        <begin position="129"/>
        <end position="133"/>
    </location>
</feature>
<feature type="helix" evidence="5">
    <location>
        <begin position="138"/>
        <end position="141"/>
    </location>
</feature>
<feature type="strand" evidence="5">
    <location>
        <begin position="149"/>
        <end position="153"/>
    </location>
</feature>
<feature type="helix" evidence="5">
    <location>
        <begin position="161"/>
        <end position="169"/>
    </location>
</feature>
<feature type="turn" evidence="5">
    <location>
        <begin position="170"/>
        <end position="173"/>
    </location>
</feature>
<feature type="strand" evidence="5">
    <location>
        <begin position="176"/>
        <end position="183"/>
    </location>
</feature>
<feature type="strand" evidence="5">
    <location>
        <begin position="190"/>
        <end position="199"/>
    </location>
</feature>
<feature type="turn" evidence="5">
    <location>
        <begin position="200"/>
        <end position="203"/>
    </location>
</feature>
<feature type="helix" evidence="5">
    <location>
        <begin position="209"/>
        <end position="212"/>
    </location>
</feature>
<feature type="strand" evidence="5">
    <location>
        <begin position="215"/>
        <end position="217"/>
    </location>
</feature>
<feature type="helix" evidence="6">
    <location>
        <begin position="234"/>
        <end position="237"/>
    </location>
</feature>
<feature type="strand" evidence="6">
    <location>
        <begin position="245"/>
        <end position="249"/>
    </location>
</feature>
<feature type="helix" evidence="6">
    <location>
        <begin position="257"/>
        <end position="265"/>
    </location>
</feature>
<feature type="strand" evidence="6">
    <location>
        <begin position="271"/>
        <end position="278"/>
    </location>
</feature>
<feature type="strand" evidence="6">
    <location>
        <begin position="281"/>
        <end position="288"/>
    </location>
</feature>
<feature type="strand" evidence="6">
    <location>
        <begin position="290"/>
        <end position="292"/>
    </location>
</feature>
<feature type="helix" evidence="6">
    <location>
        <begin position="295"/>
        <end position="297"/>
    </location>
</feature>
<feature type="strand" evidence="6">
    <location>
        <begin position="299"/>
        <end position="301"/>
    </location>
</feature>
<comment type="cofactor">
    <cofactor evidence="4">
        <name>Zn(2+)</name>
        <dbReference type="ChEBI" id="CHEBI:29105"/>
    </cofactor>
</comment>
<comment type="subcellular location">
    <subcellularLocation>
        <location evidence="1">Cell inner membrane</location>
        <topology evidence="1">Multi-pass membrane protein</topology>
    </subcellularLocation>
</comment>
<comment type="similarity">
    <text evidence="4">Belongs to the peptidase M50B family.</text>
</comment>
<accession>Q9HXY3</accession>
<evidence type="ECO:0000250" key="1"/>
<evidence type="ECO:0000255" key="2"/>
<evidence type="ECO:0000255" key="3">
    <source>
        <dbReference type="PROSITE-ProRule" id="PRU10095"/>
    </source>
</evidence>
<evidence type="ECO:0000305" key="4"/>
<evidence type="ECO:0007829" key="5">
    <source>
        <dbReference type="PDB" id="7XFS"/>
    </source>
</evidence>
<evidence type="ECO:0007829" key="6">
    <source>
        <dbReference type="PDB" id="7XFT"/>
    </source>
</evidence>
<proteinExistence type="evidence at protein level"/>
<protein>
    <recommendedName>
        <fullName>Putative zinc metalloprotease PA3649</fullName>
        <ecNumber>3.4.24.-</ecNumber>
    </recommendedName>
</protein>
<sequence length="450" mass="48530">MSALYMIVGTLVALGVLVTFHEFGHFWVARRCGVKVLRFSVGFGTPLVRWHDRHGTEFVVAAIPLGGYVKMLDEREAEVPAHLLEQSFNRKTVRQRIAIVAAGPIANFLLAILFFWVVALLGSQQVRPVIGSVAPESLAAQAGLEAGQELLAVDGEPVTGWNGVNLQLVRRLGESGTLEVRVQEKGSNVDSTHQVRLDGWLKGEDNPDPIASLGIRPWRPALPPVLAELDPKGPAQAAGLKLGDRLQSIDGIAVDDWQQVVDSVRARPGQRVQLKVLRDGEVLDVALELAVRGEGKARSGYMGAGVAGTEWPAEMLREVSYGPLEAVGQALSRTWTMSLLTLDSIKKMLLGELSVKNLSGPITIAKVAGASAQSGVGDFLNFLAYLSISLGVLNLLPIPVLDGGHLLFYLVEWVRGRPLSERVQAWGMQIGISLVVGVMLLALVNDLSRL</sequence>
<organism>
    <name type="scientific">Pseudomonas aeruginosa (strain ATCC 15692 / DSM 22644 / CIP 104116 / JCM 14847 / LMG 12228 / 1C / PRS 101 / PAO1)</name>
    <dbReference type="NCBI Taxonomy" id="208964"/>
    <lineage>
        <taxon>Bacteria</taxon>
        <taxon>Pseudomonadati</taxon>
        <taxon>Pseudomonadota</taxon>
        <taxon>Gammaproteobacteria</taxon>
        <taxon>Pseudomonadales</taxon>
        <taxon>Pseudomonadaceae</taxon>
        <taxon>Pseudomonas</taxon>
    </lineage>
</organism>
<reference key="1">
    <citation type="journal article" date="2000" name="Nature">
        <title>Complete genome sequence of Pseudomonas aeruginosa PAO1, an opportunistic pathogen.</title>
        <authorList>
            <person name="Stover C.K."/>
            <person name="Pham X.-Q.T."/>
            <person name="Erwin A.L."/>
            <person name="Mizoguchi S.D."/>
            <person name="Warrener P."/>
            <person name="Hickey M.J."/>
            <person name="Brinkman F.S.L."/>
            <person name="Hufnagle W.O."/>
            <person name="Kowalik D.J."/>
            <person name="Lagrou M."/>
            <person name="Garber R.L."/>
            <person name="Goltry L."/>
            <person name="Tolentino E."/>
            <person name="Westbrock-Wadman S."/>
            <person name="Yuan Y."/>
            <person name="Brody L.L."/>
            <person name="Coulter S.N."/>
            <person name="Folger K.R."/>
            <person name="Kas A."/>
            <person name="Larbig K."/>
            <person name="Lim R.M."/>
            <person name="Smith K.A."/>
            <person name="Spencer D.H."/>
            <person name="Wong G.K.-S."/>
            <person name="Wu Z."/>
            <person name="Paulsen I.T."/>
            <person name="Reizer J."/>
            <person name="Saier M.H. Jr."/>
            <person name="Hancock R.E.W."/>
            <person name="Lory S."/>
            <person name="Olson M.V."/>
        </authorList>
    </citation>
    <scope>NUCLEOTIDE SEQUENCE [LARGE SCALE GENOMIC DNA]</scope>
    <source>
        <strain>ATCC 15692 / DSM 22644 / CIP 104116 / JCM 14847 / LMG 12228 / 1C / PRS 101 / PAO1</strain>
    </source>
</reference>
<gene>
    <name type="ordered locus">PA3649</name>
</gene>
<dbReference type="EC" id="3.4.24.-"/>
<dbReference type="EMBL" id="AE004091">
    <property type="protein sequence ID" value="AAG07037.1"/>
    <property type="molecule type" value="Genomic_DNA"/>
</dbReference>
<dbReference type="PIR" id="D83188">
    <property type="entry name" value="D83188"/>
</dbReference>
<dbReference type="RefSeq" id="NP_252339.1">
    <property type="nucleotide sequence ID" value="NC_002516.2"/>
</dbReference>
<dbReference type="PDB" id="7XFS">
    <property type="method" value="X-ray"/>
    <property type="resolution" value="1.06 A"/>
    <property type="chains" value="A/B=126-220"/>
</dbReference>
<dbReference type="PDB" id="7XFT">
    <property type="method" value="X-ray"/>
    <property type="resolution" value="1.21 A"/>
    <property type="chains" value="A=222-309"/>
</dbReference>
<dbReference type="PDB" id="7XFU">
    <property type="method" value="X-ray"/>
    <property type="resolution" value="1.53 A"/>
    <property type="chains" value="A/B=222-309"/>
</dbReference>
<dbReference type="PDBsum" id="7XFS"/>
<dbReference type="PDBsum" id="7XFT"/>
<dbReference type="PDBsum" id="7XFU"/>
<dbReference type="SMR" id="Q9HXY3"/>
<dbReference type="FunCoup" id="Q9HXY3">
    <property type="interactions" value="525"/>
</dbReference>
<dbReference type="STRING" id="208964.PA3649"/>
<dbReference type="PaxDb" id="208964-PA3649"/>
<dbReference type="GeneID" id="880507"/>
<dbReference type="KEGG" id="pae:PA3649"/>
<dbReference type="HOGENOM" id="CLU_025778_0_2_6"/>
<dbReference type="InParanoid" id="Q9HXY3"/>
<dbReference type="OrthoDB" id="9782003at2"/>
<dbReference type="PhylomeDB" id="Q9HXY3"/>
<dbReference type="BioCyc" id="PAER208964:G1FZ6-3719-MONOMER"/>
<dbReference type="Proteomes" id="UP000002438">
    <property type="component" value="Chromosome"/>
</dbReference>
<dbReference type="GO" id="GO:0005886">
    <property type="term" value="C:plasma membrane"/>
    <property type="evidence" value="ECO:0007669"/>
    <property type="project" value="UniProtKB-SubCell"/>
</dbReference>
<dbReference type="GO" id="GO:0046872">
    <property type="term" value="F:metal ion binding"/>
    <property type="evidence" value="ECO:0007669"/>
    <property type="project" value="UniProtKB-KW"/>
</dbReference>
<dbReference type="GO" id="GO:0004222">
    <property type="term" value="F:metalloendopeptidase activity"/>
    <property type="evidence" value="ECO:0007669"/>
    <property type="project" value="InterPro"/>
</dbReference>
<dbReference type="GO" id="GO:0006508">
    <property type="term" value="P:proteolysis"/>
    <property type="evidence" value="ECO:0007669"/>
    <property type="project" value="UniProtKB-KW"/>
</dbReference>
<dbReference type="CDD" id="cd23082">
    <property type="entry name" value="cpPDZ1_EcRseP-like"/>
    <property type="match status" value="1"/>
</dbReference>
<dbReference type="CDD" id="cd23081">
    <property type="entry name" value="cpPDZ_EcRseP-like"/>
    <property type="match status" value="1"/>
</dbReference>
<dbReference type="CDD" id="cd06163">
    <property type="entry name" value="S2P-M50_PDZ_RseP-like"/>
    <property type="match status" value="2"/>
</dbReference>
<dbReference type="Gene3D" id="2.30.42.10">
    <property type="match status" value="2"/>
</dbReference>
<dbReference type="InterPro" id="IPR001478">
    <property type="entry name" value="PDZ"/>
</dbReference>
<dbReference type="InterPro" id="IPR041489">
    <property type="entry name" value="PDZ_6"/>
</dbReference>
<dbReference type="InterPro" id="IPR036034">
    <property type="entry name" value="PDZ_sf"/>
</dbReference>
<dbReference type="InterPro" id="IPR004387">
    <property type="entry name" value="Pept_M50_Zn"/>
</dbReference>
<dbReference type="InterPro" id="IPR008915">
    <property type="entry name" value="Peptidase_M50"/>
</dbReference>
<dbReference type="NCBIfam" id="NF008046">
    <property type="entry name" value="PRK10779.1"/>
    <property type="match status" value="1"/>
</dbReference>
<dbReference type="NCBIfam" id="TIGR00054">
    <property type="entry name" value="RIP metalloprotease RseP"/>
    <property type="match status" value="1"/>
</dbReference>
<dbReference type="PANTHER" id="PTHR42837:SF2">
    <property type="entry name" value="MEMBRANE METALLOPROTEASE ARASP2, CHLOROPLASTIC-RELATED"/>
    <property type="match status" value="1"/>
</dbReference>
<dbReference type="PANTHER" id="PTHR42837">
    <property type="entry name" value="REGULATOR OF SIGMA-E PROTEASE RSEP"/>
    <property type="match status" value="1"/>
</dbReference>
<dbReference type="Pfam" id="PF13180">
    <property type="entry name" value="PDZ_2"/>
    <property type="match status" value="1"/>
</dbReference>
<dbReference type="Pfam" id="PF17820">
    <property type="entry name" value="PDZ_6"/>
    <property type="match status" value="1"/>
</dbReference>
<dbReference type="Pfam" id="PF02163">
    <property type="entry name" value="Peptidase_M50"/>
    <property type="match status" value="1"/>
</dbReference>
<dbReference type="SMART" id="SM00228">
    <property type="entry name" value="PDZ"/>
    <property type="match status" value="2"/>
</dbReference>
<dbReference type="SUPFAM" id="SSF50156">
    <property type="entry name" value="PDZ domain-like"/>
    <property type="match status" value="2"/>
</dbReference>
<dbReference type="PROSITE" id="PS00142">
    <property type="entry name" value="ZINC_PROTEASE"/>
    <property type="match status" value="1"/>
</dbReference>
<keyword id="KW-0002">3D-structure</keyword>
<keyword id="KW-0997">Cell inner membrane</keyword>
<keyword id="KW-1003">Cell membrane</keyword>
<keyword id="KW-0378">Hydrolase</keyword>
<keyword id="KW-0472">Membrane</keyword>
<keyword id="KW-0479">Metal-binding</keyword>
<keyword id="KW-0482">Metalloprotease</keyword>
<keyword id="KW-0645">Protease</keyword>
<keyword id="KW-1185">Reference proteome</keyword>
<keyword id="KW-0812">Transmembrane</keyword>
<keyword id="KW-1133">Transmembrane helix</keyword>
<keyword id="KW-0862">Zinc</keyword>
<name>Y3649_PSEAE</name>